<reference key="1">
    <citation type="journal article" date="1997" name="Proc. Natl. Acad. Sci. U.S.A.">
        <title>Sequence of a 189-kb segment of the chromosome of Rhodobacter capsulatus SB1003.</title>
        <authorList>
            <person name="Vlcek C."/>
            <person name="Paces V."/>
            <person name="Maltsev N."/>
            <person name="Paces J."/>
            <person name="Haselkorn R."/>
            <person name="Fonstein M."/>
        </authorList>
    </citation>
    <scope>NUCLEOTIDE SEQUENCE [GENOMIC DNA]</scope>
    <source>
        <strain>ATCC BAA-309 / NBRC 16581 / SB1003</strain>
    </source>
</reference>
<reference key="2">
    <citation type="journal article" date="2010" name="J. Bacteriol.">
        <title>Complete genome sequence of the photosynthetic purple nonsulfur bacterium Rhodobacter capsulatus SB 1003.</title>
        <authorList>
            <person name="Strnad H."/>
            <person name="Lapidus A."/>
            <person name="Paces J."/>
            <person name="Ulbrich P."/>
            <person name="Vlcek C."/>
            <person name="Paces V."/>
            <person name="Haselkorn R."/>
        </authorList>
    </citation>
    <scope>NUCLEOTIDE SEQUENCE [LARGE SCALE GENOMIC DNA]</scope>
    <source>
        <strain>ATCC BAA-309 / NBRC 16581 / SB1003</strain>
    </source>
</reference>
<name>ALLA_RHOCB</name>
<gene>
    <name evidence="1" type="primary">allA</name>
    <name type="ordered locus">RCAP_rcc02030</name>
</gene>
<sequence length="161" mass="17286">MERLMIEPLTAEAFAPFGDLIDVLGPPDRLINAGLCGRHHDLARLDFDAEGRAGISLFDAQARTLPHVLDLVERHPLGSQAFLPLDGVPFLVCVAEDADGVPVRFRAFLTAPGQGVNILRNCWHGVLAPIGAPGRYAVVDRIGPGANLQEYPLPVPLLVEG</sequence>
<keyword id="KW-0456">Lyase</keyword>
<keyword id="KW-0659">Purine metabolism</keyword>
<keyword id="KW-1185">Reference proteome</keyword>
<protein>
    <recommendedName>
        <fullName evidence="1">Ureidoglycolate lyase</fullName>
        <ecNumber evidence="1">4.3.2.3</ecNumber>
    </recommendedName>
    <alternativeName>
        <fullName evidence="1">Ureidoglycolatase</fullName>
    </alternativeName>
</protein>
<organism>
    <name type="scientific">Rhodobacter capsulatus (strain ATCC BAA-309 / NBRC 16581 / SB1003)</name>
    <dbReference type="NCBI Taxonomy" id="272942"/>
    <lineage>
        <taxon>Bacteria</taxon>
        <taxon>Pseudomonadati</taxon>
        <taxon>Pseudomonadota</taxon>
        <taxon>Alphaproteobacteria</taxon>
        <taxon>Rhodobacterales</taxon>
        <taxon>Rhodobacter group</taxon>
        <taxon>Rhodobacter</taxon>
    </lineage>
</organism>
<accession>O68109</accession>
<accession>D5AUY5</accession>
<dbReference type="EC" id="4.3.2.3" evidence="1"/>
<dbReference type="EMBL" id="AF010496">
    <property type="protein sequence ID" value="AAC16199.1"/>
    <property type="molecule type" value="Genomic_DNA"/>
</dbReference>
<dbReference type="EMBL" id="CP001312">
    <property type="protein sequence ID" value="ADE85774.1"/>
    <property type="molecule type" value="Genomic_DNA"/>
</dbReference>
<dbReference type="PIR" id="T03546">
    <property type="entry name" value="T03546"/>
</dbReference>
<dbReference type="RefSeq" id="WP_013067753.1">
    <property type="nucleotide sequence ID" value="NC_014034.1"/>
</dbReference>
<dbReference type="SMR" id="O68109"/>
<dbReference type="STRING" id="272942.RCAP_rcc02030"/>
<dbReference type="GeneID" id="31490893"/>
<dbReference type="KEGG" id="rcp:RCAP_rcc02030"/>
<dbReference type="eggNOG" id="COG3194">
    <property type="taxonomic scope" value="Bacteria"/>
</dbReference>
<dbReference type="HOGENOM" id="CLU_070848_1_0_5"/>
<dbReference type="OrthoDB" id="9804602at2"/>
<dbReference type="UniPathway" id="UPA00395"/>
<dbReference type="Proteomes" id="UP000002361">
    <property type="component" value="Chromosome"/>
</dbReference>
<dbReference type="GO" id="GO:0004848">
    <property type="term" value="F:ureidoglycolate hydrolase activity"/>
    <property type="evidence" value="ECO:0007669"/>
    <property type="project" value="InterPro"/>
</dbReference>
<dbReference type="GO" id="GO:0050385">
    <property type="term" value="F:ureidoglycolate lyase activity"/>
    <property type="evidence" value="ECO:0007669"/>
    <property type="project" value="UniProtKB-UniRule"/>
</dbReference>
<dbReference type="GO" id="GO:0000256">
    <property type="term" value="P:allantoin catabolic process"/>
    <property type="evidence" value="ECO:0007669"/>
    <property type="project" value="UniProtKB-UniRule"/>
</dbReference>
<dbReference type="GO" id="GO:0006145">
    <property type="term" value="P:purine nucleobase catabolic process"/>
    <property type="evidence" value="ECO:0007669"/>
    <property type="project" value="UniProtKB-UniRule"/>
</dbReference>
<dbReference type="CDD" id="cd20298">
    <property type="entry name" value="cupin_UAH"/>
    <property type="match status" value="1"/>
</dbReference>
<dbReference type="Gene3D" id="2.60.120.480">
    <property type="entry name" value="Ureidoglycolate hydrolase"/>
    <property type="match status" value="1"/>
</dbReference>
<dbReference type="HAMAP" id="MF_00616">
    <property type="entry name" value="Ureidogly_lyase"/>
    <property type="match status" value="1"/>
</dbReference>
<dbReference type="InterPro" id="IPR011051">
    <property type="entry name" value="RmlC_Cupin_sf"/>
</dbReference>
<dbReference type="InterPro" id="IPR047233">
    <property type="entry name" value="UAH_cupin"/>
</dbReference>
<dbReference type="InterPro" id="IPR007247">
    <property type="entry name" value="Ureidogly_lyase"/>
</dbReference>
<dbReference type="InterPro" id="IPR023525">
    <property type="entry name" value="Ureidogly_lyase_bac"/>
</dbReference>
<dbReference type="InterPro" id="IPR024060">
    <property type="entry name" value="Ureidoglycolate_lyase_dom_sf"/>
</dbReference>
<dbReference type="NCBIfam" id="NF009932">
    <property type="entry name" value="PRK13395.1"/>
    <property type="match status" value="1"/>
</dbReference>
<dbReference type="PANTHER" id="PTHR21221">
    <property type="entry name" value="UREIDOGLYCOLATE HYDROLASE"/>
    <property type="match status" value="1"/>
</dbReference>
<dbReference type="PANTHER" id="PTHR21221:SF1">
    <property type="entry name" value="UREIDOGLYCOLATE LYASE"/>
    <property type="match status" value="1"/>
</dbReference>
<dbReference type="Pfam" id="PF04115">
    <property type="entry name" value="Ureidogly_lyase"/>
    <property type="match status" value="1"/>
</dbReference>
<dbReference type="PIRSF" id="PIRSF017306">
    <property type="entry name" value="Ureidogly_hydro"/>
    <property type="match status" value="1"/>
</dbReference>
<dbReference type="SUPFAM" id="SSF51182">
    <property type="entry name" value="RmlC-like cupins"/>
    <property type="match status" value="1"/>
</dbReference>
<feature type="chain" id="PRO_0000120556" description="Ureidoglycolate lyase">
    <location>
        <begin position="1"/>
        <end position="161"/>
    </location>
</feature>
<evidence type="ECO:0000255" key="1">
    <source>
        <dbReference type="HAMAP-Rule" id="MF_00616"/>
    </source>
</evidence>
<comment type="function">
    <text evidence="1">Catalyzes the catabolism of the allantoin degradation intermediate (S)-ureidoglycolate, generating urea and glyoxylate. Involved in the utilization of allantoin as nitrogen source.</text>
</comment>
<comment type="catalytic activity">
    <reaction evidence="1">
        <text>(S)-ureidoglycolate = urea + glyoxylate</text>
        <dbReference type="Rhea" id="RHEA:11304"/>
        <dbReference type="ChEBI" id="CHEBI:16199"/>
        <dbReference type="ChEBI" id="CHEBI:36655"/>
        <dbReference type="ChEBI" id="CHEBI:57296"/>
        <dbReference type="EC" id="4.3.2.3"/>
    </reaction>
</comment>
<comment type="cofactor">
    <cofactor evidence="1">
        <name>Ni(2+)</name>
        <dbReference type="ChEBI" id="CHEBI:49786"/>
    </cofactor>
</comment>
<comment type="pathway">
    <text evidence="1">Nitrogen metabolism; (S)-allantoin degradation.</text>
</comment>
<comment type="subunit">
    <text evidence="1">Homodimer.</text>
</comment>
<comment type="similarity">
    <text evidence="1">Belongs to the ureidoglycolate lyase family.</text>
</comment>
<proteinExistence type="inferred from homology"/>